<name>PRMA_BURPS</name>
<comment type="function">
    <text evidence="1">Methylates ribosomal protein L11.</text>
</comment>
<comment type="catalytic activity">
    <reaction evidence="1">
        <text>L-lysyl-[protein] + 3 S-adenosyl-L-methionine = N(6),N(6),N(6)-trimethyl-L-lysyl-[protein] + 3 S-adenosyl-L-homocysteine + 3 H(+)</text>
        <dbReference type="Rhea" id="RHEA:54192"/>
        <dbReference type="Rhea" id="RHEA-COMP:9752"/>
        <dbReference type="Rhea" id="RHEA-COMP:13826"/>
        <dbReference type="ChEBI" id="CHEBI:15378"/>
        <dbReference type="ChEBI" id="CHEBI:29969"/>
        <dbReference type="ChEBI" id="CHEBI:57856"/>
        <dbReference type="ChEBI" id="CHEBI:59789"/>
        <dbReference type="ChEBI" id="CHEBI:61961"/>
    </reaction>
</comment>
<comment type="subcellular location">
    <subcellularLocation>
        <location evidence="1">Cytoplasm</location>
    </subcellularLocation>
</comment>
<comment type="similarity">
    <text evidence="1">Belongs to the methyltransferase superfamily. PrmA family.</text>
</comment>
<evidence type="ECO:0000255" key="1">
    <source>
        <dbReference type="HAMAP-Rule" id="MF_00735"/>
    </source>
</evidence>
<protein>
    <recommendedName>
        <fullName evidence="1">Ribosomal protein L11 methyltransferase</fullName>
        <shortName evidence="1">L11 Mtase</shortName>
        <ecNumber evidence="1">2.1.1.-</ecNumber>
    </recommendedName>
</protein>
<reference key="1">
    <citation type="journal article" date="2004" name="Proc. Natl. Acad. Sci. U.S.A.">
        <title>Genomic plasticity of the causative agent of melioidosis, Burkholderia pseudomallei.</title>
        <authorList>
            <person name="Holden M.T.G."/>
            <person name="Titball R.W."/>
            <person name="Peacock S.J."/>
            <person name="Cerdeno-Tarraga A.-M."/>
            <person name="Atkins T."/>
            <person name="Crossman L.C."/>
            <person name="Pitt T."/>
            <person name="Churcher C."/>
            <person name="Mungall K.L."/>
            <person name="Bentley S.D."/>
            <person name="Sebaihia M."/>
            <person name="Thomson N.R."/>
            <person name="Bason N."/>
            <person name="Beacham I.R."/>
            <person name="Brooks K."/>
            <person name="Brown K.A."/>
            <person name="Brown N.F."/>
            <person name="Challis G.L."/>
            <person name="Cherevach I."/>
            <person name="Chillingworth T."/>
            <person name="Cronin A."/>
            <person name="Crossett B."/>
            <person name="Davis P."/>
            <person name="DeShazer D."/>
            <person name="Feltwell T."/>
            <person name="Fraser A."/>
            <person name="Hance Z."/>
            <person name="Hauser H."/>
            <person name="Holroyd S."/>
            <person name="Jagels K."/>
            <person name="Keith K.E."/>
            <person name="Maddison M."/>
            <person name="Moule S."/>
            <person name="Price C."/>
            <person name="Quail M.A."/>
            <person name="Rabbinowitsch E."/>
            <person name="Rutherford K."/>
            <person name="Sanders M."/>
            <person name="Simmonds M."/>
            <person name="Songsivilai S."/>
            <person name="Stevens K."/>
            <person name="Tumapa S."/>
            <person name="Vesaratchavest M."/>
            <person name="Whitehead S."/>
            <person name="Yeats C."/>
            <person name="Barrell B.G."/>
            <person name="Oyston P.C.F."/>
            <person name="Parkhill J."/>
        </authorList>
    </citation>
    <scope>NUCLEOTIDE SEQUENCE [LARGE SCALE GENOMIC DNA]</scope>
    <source>
        <strain>K96243</strain>
    </source>
</reference>
<dbReference type="EC" id="2.1.1.-" evidence="1"/>
<dbReference type="EMBL" id="BX571965">
    <property type="protein sequence ID" value="CAH36995.1"/>
    <property type="molecule type" value="Genomic_DNA"/>
</dbReference>
<dbReference type="RefSeq" id="WP_009931932.1">
    <property type="nucleotide sequence ID" value="NZ_CP009538.1"/>
</dbReference>
<dbReference type="RefSeq" id="YP_109579.1">
    <property type="nucleotide sequence ID" value="NC_006350.1"/>
</dbReference>
<dbReference type="SMR" id="Q63QN9"/>
<dbReference type="STRING" id="272560.BPSL2985"/>
<dbReference type="KEGG" id="bps:BPSL2985"/>
<dbReference type="PATRIC" id="fig|272560.51.peg.2288"/>
<dbReference type="eggNOG" id="COG2264">
    <property type="taxonomic scope" value="Bacteria"/>
</dbReference>
<dbReference type="Proteomes" id="UP000000605">
    <property type="component" value="Chromosome 1"/>
</dbReference>
<dbReference type="GO" id="GO:0005829">
    <property type="term" value="C:cytosol"/>
    <property type="evidence" value="ECO:0007669"/>
    <property type="project" value="TreeGrafter"/>
</dbReference>
<dbReference type="GO" id="GO:0016279">
    <property type="term" value="F:protein-lysine N-methyltransferase activity"/>
    <property type="evidence" value="ECO:0007669"/>
    <property type="project" value="TreeGrafter"/>
</dbReference>
<dbReference type="GO" id="GO:0032259">
    <property type="term" value="P:methylation"/>
    <property type="evidence" value="ECO:0007669"/>
    <property type="project" value="UniProtKB-KW"/>
</dbReference>
<dbReference type="CDD" id="cd02440">
    <property type="entry name" value="AdoMet_MTases"/>
    <property type="match status" value="1"/>
</dbReference>
<dbReference type="Gene3D" id="3.40.50.150">
    <property type="entry name" value="Vaccinia Virus protein VP39"/>
    <property type="match status" value="1"/>
</dbReference>
<dbReference type="HAMAP" id="MF_00735">
    <property type="entry name" value="Methyltr_PrmA"/>
    <property type="match status" value="1"/>
</dbReference>
<dbReference type="InterPro" id="IPR050078">
    <property type="entry name" value="Ribosomal_L11_MeTrfase_PrmA"/>
</dbReference>
<dbReference type="InterPro" id="IPR004498">
    <property type="entry name" value="Ribosomal_PrmA_MeTrfase"/>
</dbReference>
<dbReference type="InterPro" id="IPR029063">
    <property type="entry name" value="SAM-dependent_MTases_sf"/>
</dbReference>
<dbReference type="NCBIfam" id="TIGR00406">
    <property type="entry name" value="prmA"/>
    <property type="match status" value="1"/>
</dbReference>
<dbReference type="PANTHER" id="PTHR43648">
    <property type="entry name" value="ELECTRON TRANSFER FLAVOPROTEIN BETA SUBUNIT LYSINE METHYLTRANSFERASE"/>
    <property type="match status" value="1"/>
</dbReference>
<dbReference type="PANTHER" id="PTHR43648:SF1">
    <property type="entry name" value="ELECTRON TRANSFER FLAVOPROTEIN BETA SUBUNIT LYSINE METHYLTRANSFERASE"/>
    <property type="match status" value="1"/>
</dbReference>
<dbReference type="Pfam" id="PF06325">
    <property type="entry name" value="PrmA"/>
    <property type="match status" value="1"/>
</dbReference>
<dbReference type="PIRSF" id="PIRSF000401">
    <property type="entry name" value="RPL11_MTase"/>
    <property type="match status" value="1"/>
</dbReference>
<dbReference type="SUPFAM" id="SSF53335">
    <property type="entry name" value="S-adenosyl-L-methionine-dependent methyltransferases"/>
    <property type="match status" value="1"/>
</dbReference>
<keyword id="KW-0963">Cytoplasm</keyword>
<keyword id="KW-0489">Methyltransferase</keyword>
<keyword id="KW-1185">Reference proteome</keyword>
<keyword id="KW-0949">S-adenosyl-L-methionine</keyword>
<keyword id="KW-0808">Transferase</keyword>
<gene>
    <name evidence="1" type="primary">prmA</name>
    <name type="ordered locus">BPSL2985</name>
</gene>
<sequence length="300" mass="32624">MSYRELVAELPREHAEALSDALVELGALSVSVEDADADTPDEQPLFGEPGLVPERTAWQHSRVIALVDATQDPAVLLAAAANEAGLARTPRFELREVEEQDWVRLTQSQFEPIHIGEKIWVVPSWHDAPQPDALVLELDPGLAFGTGSHPTTRLCMEWLEQTVQPGQTVLDYGCGSGILAILAKKCGAGRVTGIDIDPQAVEAARHNSERNRADVTYGLPDDCPDGEFDIVVANILSNPLKLMASMLASKVKPGGRIALSGVLARQADEVASVYARYIDIAVWREHEGWVCLAGTRRESH</sequence>
<feature type="chain" id="PRO_0000192247" description="Ribosomal protein L11 methyltransferase">
    <location>
        <begin position="1"/>
        <end position="300"/>
    </location>
</feature>
<feature type="binding site" evidence="1">
    <location>
        <position position="152"/>
    </location>
    <ligand>
        <name>S-adenosyl-L-methionine</name>
        <dbReference type="ChEBI" id="CHEBI:59789"/>
    </ligand>
</feature>
<feature type="binding site" evidence="1">
    <location>
        <position position="173"/>
    </location>
    <ligand>
        <name>S-adenosyl-L-methionine</name>
        <dbReference type="ChEBI" id="CHEBI:59789"/>
    </ligand>
</feature>
<feature type="binding site" evidence="1">
    <location>
        <position position="195"/>
    </location>
    <ligand>
        <name>S-adenosyl-L-methionine</name>
        <dbReference type="ChEBI" id="CHEBI:59789"/>
    </ligand>
</feature>
<feature type="binding site" evidence="1">
    <location>
        <position position="234"/>
    </location>
    <ligand>
        <name>S-adenosyl-L-methionine</name>
        <dbReference type="ChEBI" id="CHEBI:59789"/>
    </ligand>
</feature>
<organism>
    <name type="scientific">Burkholderia pseudomallei (strain K96243)</name>
    <dbReference type="NCBI Taxonomy" id="272560"/>
    <lineage>
        <taxon>Bacteria</taxon>
        <taxon>Pseudomonadati</taxon>
        <taxon>Pseudomonadota</taxon>
        <taxon>Betaproteobacteria</taxon>
        <taxon>Burkholderiales</taxon>
        <taxon>Burkholderiaceae</taxon>
        <taxon>Burkholderia</taxon>
        <taxon>pseudomallei group</taxon>
    </lineage>
</organism>
<proteinExistence type="inferred from homology"/>
<accession>Q63QN9</accession>